<reference key="1">
    <citation type="journal article" date="2008" name="J. Bacteriol.">
        <title>The complete genome sequence of Actinobacillus pleuropneumoniae L20 (serotype 5b).</title>
        <authorList>
            <person name="Foote S.J."/>
            <person name="Bosse J.T."/>
            <person name="Bouevitch A.B."/>
            <person name="Langford P.R."/>
            <person name="Young N.M."/>
            <person name="Nash J.H.E."/>
        </authorList>
    </citation>
    <scope>NUCLEOTIDE SEQUENCE [LARGE SCALE GENOMIC DNA]</scope>
    <source>
        <strain>L20</strain>
    </source>
</reference>
<organism>
    <name type="scientific">Actinobacillus pleuropneumoniae serotype 5b (strain L20)</name>
    <dbReference type="NCBI Taxonomy" id="416269"/>
    <lineage>
        <taxon>Bacteria</taxon>
        <taxon>Pseudomonadati</taxon>
        <taxon>Pseudomonadota</taxon>
        <taxon>Gammaproteobacteria</taxon>
        <taxon>Pasteurellales</taxon>
        <taxon>Pasteurellaceae</taxon>
        <taxon>Actinobacillus</taxon>
    </lineage>
</organism>
<evidence type="ECO:0000255" key="1">
    <source>
        <dbReference type="HAMAP-Rule" id="MF_01382"/>
    </source>
</evidence>
<evidence type="ECO:0000256" key="2">
    <source>
        <dbReference type="SAM" id="MobiDB-lite"/>
    </source>
</evidence>
<gene>
    <name evidence="1" type="primary">secA</name>
    <name type="ordered locus">APL_0239</name>
</gene>
<proteinExistence type="inferred from homology"/>
<dbReference type="EC" id="7.4.2.8" evidence="1"/>
<dbReference type="EMBL" id="CP000569">
    <property type="protein sequence ID" value="ABN73347.1"/>
    <property type="molecule type" value="Genomic_DNA"/>
</dbReference>
<dbReference type="RefSeq" id="WP_005600297.1">
    <property type="nucleotide sequence ID" value="NC_009053.1"/>
</dbReference>
<dbReference type="BMRB" id="A3MYW1"/>
<dbReference type="SMR" id="A3MYW1"/>
<dbReference type="STRING" id="416269.APL_0239"/>
<dbReference type="EnsemblBacteria" id="ABN73347">
    <property type="protein sequence ID" value="ABN73347"/>
    <property type="gene ID" value="APL_0239"/>
</dbReference>
<dbReference type="KEGG" id="apl:APL_0239"/>
<dbReference type="eggNOG" id="COG0653">
    <property type="taxonomic scope" value="Bacteria"/>
</dbReference>
<dbReference type="HOGENOM" id="CLU_005314_3_0_6"/>
<dbReference type="Proteomes" id="UP000001432">
    <property type="component" value="Chromosome"/>
</dbReference>
<dbReference type="GO" id="GO:0031522">
    <property type="term" value="C:cell envelope Sec protein transport complex"/>
    <property type="evidence" value="ECO:0007669"/>
    <property type="project" value="TreeGrafter"/>
</dbReference>
<dbReference type="GO" id="GO:0005829">
    <property type="term" value="C:cytosol"/>
    <property type="evidence" value="ECO:0007669"/>
    <property type="project" value="TreeGrafter"/>
</dbReference>
<dbReference type="GO" id="GO:0005886">
    <property type="term" value="C:plasma membrane"/>
    <property type="evidence" value="ECO:0007669"/>
    <property type="project" value="UniProtKB-SubCell"/>
</dbReference>
<dbReference type="GO" id="GO:0005524">
    <property type="term" value="F:ATP binding"/>
    <property type="evidence" value="ECO:0007669"/>
    <property type="project" value="UniProtKB-UniRule"/>
</dbReference>
<dbReference type="GO" id="GO:0046872">
    <property type="term" value="F:metal ion binding"/>
    <property type="evidence" value="ECO:0007669"/>
    <property type="project" value="UniProtKB-KW"/>
</dbReference>
<dbReference type="GO" id="GO:0008564">
    <property type="term" value="F:protein-exporting ATPase activity"/>
    <property type="evidence" value="ECO:0007669"/>
    <property type="project" value="UniProtKB-EC"/>
</dbReference>
<dbReference type="GO" id="GO:0065002">
    <property type="term" value="P:intracellular protein transmembrane transport"/>
    <property type="evidence" value="ECO:0007669"/>
    <property type="project" value="UniProtKB-UniRule"/>
</dbReference>
<dbReference type="GO" id="GO:0017038">
    <property type="term" value="P:protein import"/>
    <property type="evidence" value="ECO:0007669"/>
    <property type="project" value="InterPro"/>
</dbReference>
<dbReference type="GO" id="GO:0006605">
    <property type="term" value="P:protein targeting"/>
    <property type="evidence" value="ECO:0007669"/>
    <property type="project" value="UniProtKB-UniRule"/>
</dbReference>
<dbReference type="GO" id="GO:0043952">
    <property type="term" value="P:protein transport by the Sec complex"/>
    <property type="evidence" value="ECO:0007669"/>
    <property type="project" value="TreeGrafter"/>
</dbReference>
<dbReference type="CDD" id="cd17928">
    <property type="entry name" value="DEXDc_SecA"/>
    <property type="match status" value="1"/>
</dbReference>
<dbReference type="CDD" id="cd18803">
    <property type="entry name" value="SF2_C_secA"/>
    <property type="match status" value="1"/>
</dbReference>
<dbReference type="FunFam" id="3.40.50.300:FF:000113">
    <property type="entry name" value="Preprotein translocase subunit SecA"/>
    <property type="match status" value="1"/>
</dbReference>
<dbReference type="FunFam" id="3.90.1440.10:FF:000001">
    <property type="entry name" value="Preprotein translocase subunit SecA"/>
    <property type="match status" value="1"/>
</dbReference>
<dbReference type="FunFam" id="1.10.3060.10:FF:000003">
    <property type="entry name" value="Protein translocase subunit SecA"/>
    <property type="match status" value="1"/>
</dbReference>
<dbReference type="Gene3D" id="1.10.3060.10">
    <property type="entry name" value="Helical scaffold and wing domains of SecA"/>
    <property type="match status" value="1"/>
</dbReference>
<dbReference type="Gene3D" id="3.40.50.300">
    <property type="entry name" value="P-loop containing nucleotide triphosphate hydrolases"/>
    <property type="match status" value="2"/>
</dbReference>
<dbReference type="Gene3D" id="3.90.1440.10">
    <property type="entry name" value="SecA, preprotein cross-linking domain"/>
    <property type="match status" value="1"/>
</dbReference>
<dbReference type="HAMAP" id="MF_01382">
    <property type="entry name" value="SecA"/>
    <property type="match status" value="1"/>
</dbReference>
<dbReference type="InterPro" id="IPR014001">
    <property type="entry name" value="Helicase_ATP-bd"/>
</dbReference>
<dbReference type="InterPro" id="IPR001650">
    <property type="entry name" value="Helicase_C-like"/>
</dbReference>
<dbReference type="InterPro" id="IPR027417">
    <property type="entry name" value="P-loop_NTPase"/>
</dbReference>
<dbReference type="InterPro" id="IPR004027">
    <property type="entry name" value="SEC_C_motif"/>
</dbReference>
<dbReference type="InterPro" id="IPR000185">
    <property type="entry name" value="SecA"/>
</dbReference>
<dbReference type="InterPro" id="IPR020937">
    <property type="entry name" value="SecA_CS"/>
</dbReference>
<dbReference type="InterPro" id="IPR011115">
    <property type="entry name" value="SecA_DEAD"/>
</dbReference>
<dbReference type="InterPro" id="IPR014018">
    <property type="entry name" value="SecA_motor_DEAD"/>
</dbReference>
<dbReference type="InterPro" id="IPR011130">
    <property type="entry name" value="SecA_preprotein_X-link_dom"/>
</dbReference>
<dbReference type="InterPro" id="IPR044722">
    <property type="entry name" value="SecA_SF2_C"/>
</dbReference>
<dbReference type="InterPro" id="IPR011116">
    <property type="entry name" value="SecA_Wing/Scaffold"/>
</dbReference>
<dbReference type="InterPro" id="IPR036266">
    <property type="entry name" value="SecA_Wing/Scaffold_sf"/>
</dbReference>
<dbReference type="InterPro" id="IPR036670">
    <property type="entry name" value="SecA_X-link_sf"/>
</dbReference>
<dbReference type="NCBIfam" id="NF009538">
    <property type="entry name" value="PRK12904.1"/>
    <property type="match status" value="1"/>
</dbReference>
<dbReference type="NCBIfam" id="TIGR00963">
    <property type="entry name" value="secA"/>
    <property type="match status" value="1"/>
</dbReference>
<dbReference type="PANTHER" id="PTHR30612:SF0">
    <property type="entry name" value="CHLOROPLAST PROTEIN-TRANSPORTING ATPASE"/>
    <property type="match status" value="1"/>
</dbReference>
<dbReference type="PANTHER" id="PTHR30612">
    <property type="entry name" value="SECA INNER MEMBRANE COMPONENT OF SEC PROTEIN SECRETION SYSTEM"/>
    <property type="match status" value="1"/>
</dbReference>
<dbReference type="Pfam" id="PF21090">
    <property type="entry name" value="P-loop_SecA"/>
    <property type="match status" value="1"/>
</dbReference>
<dbReference type="Pfam" id="PF02810">
    <property type="entry name" value="SEC-C"/>
    <property type="match status" value="1"/>
</dbReference>
<dbReference type="Pfam" id="PF07517">
    <property type="entry name" value="SecA_DEAD"/>
    <property type="match status" value="1"/>
</dbReference>
<dbReference type="Pfam" id="PF01043">
    <property type="entry name" value="SecA_PP_bind"/>
    <property type="match status" value="1"/>
</dbReference>
<dbReference type="Pfam" id="PF07516">
    <property type="entry name" value="SecA_SW"/>
    <property type="match status" value="1"/>
</dbReference>
<dbReference type="PRINTS" id="PR00906">
    <property type="entry name" value="SECA"/>
</dbReference>
<dbReference type="SMART" id="SM00957">
    <property type="entry name" value="SecA_DEAD"/>
    <property type="match status" value="1"/>
</dbReference>
<dbReference type="SMART" id="SM00958">
    <property type="entry name" value="SecA_PP_bind"/>
    <property type="match status" value="1"/>
</dbReference>
<dbReference type="SUPFAM" id="SSF81886">
    <property type="entry name" value="Helical scaffold and wing domains of SecA"/>
    <property type="match status" value="1"/>
</dbReference>
<dbReference type="SUPFAM" id="SSF52540">
    <property type="entry name" value="P-loop containing nucleoside triphosphate hydrolases"/>
    <property type="match status" value="2"/>
</dbReference>
<dbReference type="SUPFAM" id="SSF81767">
    <property type="entry name" value="Pre-protein crosslinking domain of SecA"/>
    <property type="match status" value="1"/>
</dbReference>
<dbReference type="PROSITE" id="PS01312">
    <property type="entry name" value="SECA"/>
    <property type="match status" value="1"/>
</dbReference>
<dbReference type="PROSITE" id="PS51196">
    <property type="entry name" value="SECA_MOTOR_DEAD"/>
    <property type="match status" value="1"/>
</dbReference>
<accession>A3MYW1</accession>
<feature type="chain" id="PRO_0000320713" description="Protein translocase subunit SecA">
    <location>
        <begin position="1"/>
        <end position="905"/>
    </location>
</feature>
<feature type="region of interest" description="Disordered" evidence="2">
    <location>
        <begin position="840"/>
        <end position="905"/>
    </location>
</feature>
<feature type="compositionally biased region" description="Low complexity" evidence="2">
    <location>
        <begin position="843"/>
        <end position="852"/>
    </location>
</feature>
<feature type="compositionally biased region" description="Basic and acidic residues" evidence="2">
    <location>
        <begin position="853"/>
        <end position="862"/>
    </location>
</feature>
<feature type="compositionally biased region" description="Polar residues" evidence="2">
    <location>
        <begin position="863"/>
        <end position="874"/>
    </location>
</feature>
<feature type="compositionally biased region" description="Basic residues" evidence="2">
    <location>
        <begin position="892"/>
        <end position="905"/>
    </location>
</feature>
<feature type="binding site" evidence="1">
    <location>
        <position position="87"/>
    </location>
    <ligand>
        <name>ATP</name>
        <dbReference type="ChEBI" id="CHEBI:30616"/>
    </ligand>
</feature>
<feature type="binding site" evidence="1">
    <location>
        <begin position="105"/>
        <end position="109"/>
    </location>
    <ligand>
        <name>ATP</name>
        <dbReference type="ChEBI" id="CHEBI:30616"/>
    </ligand>
</feature>
<feature type="binding site" evidence="1">
    <location>
        <position position="512"/>
    </location>
    <ligand>
        <name>ATP</name>
        <dbReference type="ChEBI" id="CHEBI:30616"/>
    </ligand>
</feature>
<feature type="binding site" evidence="1">
    <location>
        <position position="886"/>
    </location>
    <ligand>
        <name>Zn(2+)</name>
        <dbReference type="ChEBI" id="CHEBI:29105"/>
    </ligand>
</feature>
<feature type="binding site" evidence="1">
    <location>
        <position position="888"/>
    </location>
    <ligand>
        <name>Zn(2+)</name>
        <dbReference type="ChEBI" id="CHEBI:29105"/>
    </ligand>
</feature>
<feature type="binding site" evidence="1">
    <location>
        <position position="897"/>
    </location>
    <ligand>
        <name>Zn(2+)</name>
        <dbReference type="ChEBI" id="CHEBI:29105"/>
    </ligand>
</feature>
<feature type="binding site" evidence="1">
    <location>
        <position position="898"/>
    </location>
    <ligand>
        <name>Zn(2+)</name>
        <dbReference type="ChEBI" id="CHEBI:29105"/>
    </ligand>
</feature>
<protein>
    <recommendedName>
        <fullName evidence="1">Protein translocase subunit SecA</fullName>
        <ecNumber evidence="1">7.4.2.8</ecNumber>
    </recommendedName>
</protein>
<sequence length="905" mass="102496">MISKIITSIFGSSNDRTLKRLRKRVAQINKLEPAFEKLTDEELQAKTAEFKQRLADGASLDSLLHEAFATVREASRRVMGMRHFDVQLIGGMVLTNRNIAEMRTGEGKTLTATLPCYLNALTGKGVHVVTVNDYLARRDAETNRPLFEFLGLSVAVNVPGLPNEVKREAYKADITYSTNSELGFDYLRDNLAHAKEDRFQRELHYALVDEVDSILIDEARTPLIISGPAEDATQIYQAIDTIIPHLVQQDKEDTEEYTGEGDFTLDLKNKQAHLTERGMVKVEGILTEMGLMQEGETLYHPARIALLHHVYAALRAHKLFELNVDYIVKDGEVVIIDEHTGRTMAGRRWSDGLHQAIEAKEKVNIQGENQTVASITYQNYFRLYEKLAGMTGTADTEAFEFQQIYGLDTIVIPTNKPVIRDDRTDLMFKSEPEKFAAIIKDIQECMARQQPVLVGTASVEKSELLSAELTKAGIAHNVLNAKFHAQEAEIVAEAGAPGAVTIATNMAGRGTDIVLGGNWKAEIAKLENPTEEQIEAIKAAWKERYDIVMKAGGLHIIGTERHESRRIDNQLRGRSGRQGDPGSSRFYLSLDDALMRIYLNEGKLNMMRKAFSEEGEAMESKLLTKVIASAQAKVEAHNFDGRKNLLQYDDVANEQRKAIYEQRNYLLETEDISAMIETIRGDVFNRVIDQFIPPQSIEEMWDVAGLEEALKRQFGMELPIQHWLEQENDLHEETLRERIIDIATQEYHAKEEKVGSEVMRNFEKGVMLQNLDELWKEHLSAMDYLRKGIHLRGYAQKDPKQEYKKESFEMFTNMLDLLKSNVISVLSRIQVRSQEEIEEAQRQQEAMAQAESENYRTADHQAEAQQSESLTEEQLANLDIGRNDPCPCGSGKKYKHCHGSKARYA</sequence>
<keyword id="KW-0067">ATP-binding</keyword>
<keyword id="KW-0997">Cell inner membrane</keyword>
<keyword id="KW-1003">Cell membrane</keyword>
<keyword id="KW-0963">Cytoplasm</keyword>
<keyword id="KW-0472">Membrane</keyword>
<keyword id="KW-0479">Metal-binding</keyword>
<keyword id="KW-0547">Nucleotide-binding</keyword>
<keyword id="KW-0653">Protein transport</keyword>
<keyword id="KW-1185">Reference proteome</keyword>
<keyword id="KW-1278">Translocase</keyword>
<keyword id="KW-0811">Translocation</keyword>
<keyword id="KW-0813">Transport</keyword>
<keyword id="KW-0862">Zinc</keyword>
<comment type="function">
    <text evidence="1">Part of the Sec protein translocase complex. Interacts with the SecYEG preprotein conducting channel. Has a central role in coupling the hydrolysis of ATP to the transfer of proteins into and across the cell membrane, serving both as a receptor for the preprotein-SecB complex and as an ATP-driven molecular motor driving the stepwise translocation of polypeptide chains across the membrane.</text>
</comment>
<comment type="catalytic activity">
    <reaction evidence="1">
        <text>ATP + H2O + cellular proteinSide 1 = ADP + phosphate + cellular proteinSide 2.</text>
        <dbReference type="EC" id="7.4.2.8"/>
    </reaction>
</comment>
<comment type="cofactor">
    <cofactor evidence="1">
        <name>Zn(2+)</name>
        <dbReference type="ChEBI" id="CHEBI:29105"/>
    </cofactor>
    <text evidence="1">May bind 1 zinc ion per subunit.</text>
</comment>
<comment type="subunit">
    <text evidence="1">Monomer and homodimer. Part of the essential Sec protein translocation apparatus which comprises SecA, SecYEG and auxiliary proteins SecDF-YajC and YidC.</text>
</comment>
<comment type="subcellular location">
    <subcellularLocation>
        <location evidence="1">Cell inner membrane</location>
        <topology evidence="1">Peripheral membrane protein</topology>
        <orientation evidence="1">Cytoplasmic side</orientation>
    </subcellularLocation>
    <subcellularLocation>
        <location evidence="1">Cytoplasm</location>
    </subcellularLocation>
    <text evidence="1">Distribution is 50-50.</text>
</comment>
<comment type="similarity">
    <text evidence="1">Belongs to the SecA family.</text>
</comment>
<name>SECA_ACTP2</name>